<reference key="1">
    <citation type="submission" date="2008-01" db="EMBL/GenBank/DDBJ databases">
        <title>Complete sequence of Pseudomonas putida GB-1.</title>
        <authorList>
            <consortium name="US DOE Joint Genome Institute"/>
            <person name="Copeland A."/>
            <person name="Lucas S."/>
            <person name="Lapidus A."/>
            <person name="Barry K."/>
            <person name="Glavina del Rio T."/>
            <person name="Dalin E."/>
            <person name="Tice H."/>
            <person name="Pitluck S."/>
            <person name="Bruce D."/>
            <person name="Goodwin L."/>
            <person name="Chertkov O."/>
            <person name="Brettin T."/>
            <person name="Detter J.C."/>
            <person name="Han C."/>
            <person name="Kuske C.R."/>
            <person name="Schmutz J."/>
            <person name="Larimer F."/>
            <person name="Land M."/>
            <person name="Hauser L."/>
            <person name="Kyrpides N."/>
            <person name="Kim E."/>
            <person name="McCarthy J.K."/>
            <person name="Richardson P."/>
        </authorList>
    </citation>
    <scope>NUCLEOTIDE SEQUENCE [LARGE SCALE GENOMIC DNA]</scope>
    <source>
        <strain>GB-1</strain>
    </source>
</reference>
<gene>
    <name evidence="1" type="primary">hfq</name>
    <name type="ordered locus">PputGB1_4946</name>
</gene>
<organism>
    <name type="scientific">Pseudomonas putida (strain GB-1)</name>
    <dbReference type="NCBI Taxonomy" id="76869"/>
    <lineage>
        <taxon>Bacteria</taxon>
        <taxon>Pseudomonadati</taxon>
        <taxon>Pseudomonadota</taxon>
        <taxon>Gammaproteobacteria</taxon>
        <taxon>Pseudomonadales</taxon>
        <taxon>Pseudomonadaceae</taxon>
        <taxon>Pseudomonas</taxon>
    </lineage>
</organism>
<dbReference type="EMBL" id="CP000926">
    <property type="protein sequence ID" value="ABZ00831.1"/>
    <property type="molecule type" value="Genomic_DNA"/>
</dbReference>
<dbReference type="RefSeq" id="WP_012274457.1">
    <property type="nucleotide sequence ID" value="NC_010322.1"/>
</dbReference>
<dbReference type="SMR" id="B0KKZ5"/>
<dbReference type="KEGG" id="ppg:PputGB1_4946"/>
<dbReference type="eggNOG" id="COG1923">
    <property type="taxonomic scope" value="Bacteria"/>
</dbReference>
<dbReference type="HOGENOM" id="CLU_113688_2_2_6"/>
<dbReference type="Proteomes" id="UP000002157">
    <property type="component" value="Chromosome"/>
</dbReference>
<dbReference type="GO" id="GO:0005829">
    <property type="term" value="C:cytosol"/>
    <property type="evidence" value="ECO:0007669"/>
    <property type="project" value="TreeGrafter"/>
</dbReference>
<dbReference type="GO" id="GO:0003723">
    <property type="term" value="F:RNA binding"/>
    <property type="evidence" value="ECO:0007669"/>
    <property type="project" value="UniProtKB-UniRule"/>
</dbReference>
<dbReference type="GO" id="GO:0006355">
    <property type="term" value="P:regulation of DNA-templated transcription"/>
    <property type="evidence" value="ECO:0007669"/>
    <property type="project" value="InterPro"/>
</dbReference>
<dbReference type="GO" id="GO:0043487">
    <property type="term" value="P:regulation of RNA stability"/>
    <property type="evidence" value="ECO:0007669"/>
    <property type="project" value="TreeGrafter"/>
</dbReference>
<dbReference type="GO" id="GO:0045974">
    <property type="term" value="P:regulation of translation, ncRNA-mediated"/>
    <property type="evidence" value="ECO:0007669"/>
    <property type="project" value="TreeGrafter"/>
</dbReference>
<dbReference type="CDD" id="cd01716">
    <property type="entry name" value="Hfq"/>
    <property type="match status" value="1"/>
</dbReference>
<dbReference type="FunFam" id="2.30.30.100:FF:000001">
    <property type="entry name" value="RNA-binding protein Hfq"/>
    <property type="match status" value="1"/>
</dbReference>
<dbReference type="Gene3D" id="2.30.30.100">
    <property type="match status" value="1"/>
</dbReference>
<dbReference type="HAMAP" id="MF_00436">
    <property type="entry name" value="Hfq"/>
    <property type="match status" value="1"/>
</dbReference>
<dbReference type="InterPro" id="IPR005001">
    <property type="entry name" value="Hfq"/>
</dbReference>
<dbReference type="InterPro" id="IPR010920">
    <property type="entry name" value="LSM_dom_sf"/>
</dbReference>
<dbReference type="InterPro" id="IPR047575">
    <property type="entry name" value="Sm"/>
</dbReference>
<dbReference type="NCBIfam" id="TIGR02383">
    <property type="entry name" value="Hfq"/>
    <property type="match status" value="1"/>
</dbReference>
<dbReference type="NCBIfam" id="NF001602">
    <property type="entry name" value="PRK00395.1"/>
    <property type="match status" value="1"/>
</dbReference>
<dbReference type="PANTHER" id="PTHR34772">
    <property type="entry name" value="RNA-BINDING PROTEIN HFQ"/>
    <property type="match status" value="1"/>
</dbReference>
<dbReference type="PANTHER" id="PTHR34772:SF1">
    <property type="entry name" value="RNA-BINDING PROTEIN HFQ"/>
    <property type="match status" value="1"/>
</dbReference>
<dbReference type="Pfam" id="PF17209">
    <property type="entry name" value="Hfq"/>
    <property type="match status" value="1"/>
</dbReference>
<dbReference type="SUPFAM" id="SSF50182">
    <property type="entry name" value="Sm-like ribonucleoproteins"/>
    <property type="match status" value="1"/>
</dbReference>
<dbReference type="PROSITE" id="PS52002">
    <property type="entry name" value="SM"/>
    <property type="match status" value="1"/>
</dbReference>
<proteinExistence type="inferred from homology"/>
<keyword id="KW-0694">RNA-binding</keyword>
<keyword id="KW-0346">Stress response</keyword>
<feature type="chain" id="PRO_1000080677" description="RNA-binding protein Hfq">
    <location>
        <begin position="1"/>
        <end position="86"/>
    </location>
</feature>
<feature type="domain" description="Sm" evidence="2">
    <location>
        <begin position="9"/>
        <end position="68"/>
    </location>
</feature>
<feature type="region of interest" description="Disordered" evidence="3">
    <location>
        <begin position="67"/>
        <end position="86"/>
    </location>
</feature>
<feature type="compositionally biased region" description="Basic and acidic residues" evidence="3">
    <location>
        <begin position="75"/>
        <end position="86"/>
    </location>
</feature>
<evidence type="ECO:0000255" key="1">
    <source>
        <dbReference type="HAMAP-Rule" id="MF_00436"/>
    </source>
</evidence>
<evidence type="ECO:0000255" key="2">
    <source>
        <dbReference type="PROSITE-ProRule" id="PRU01346"/>
    </source>
</evidence>
<evidence type="ECO:0000256" key="3">
    <source>
        <dbReference type="SAM" id="MobiDB-lite"/>
    </source>
</evidence>
<comment type="function">
    <text evidence="1">RNA chaperone that binds small regulatory RNA (sRNAs) and mRNAs to facilitate mRNA translational regulation in response to envelope stress, environmental stress and changes in metabolite concentrations. Also binds with high specificity to tRNAs.</text>
</comment>
<comment type="subunit">
    <text evidence="1">Homohexamer.</text>
</comment>
<comment type="similarity">
    <text evidence="1">Belongs to the Hfq family.</text>
</comment>
<sequence length="86" mass="9432">MSKGHSLQDPYLNTLRKEKVPVSIYLVNGIKLQGSIESFDQFVVLLKNTVSQMVYKHAISTVVPARPVRLPSPTDGEHGDSEPGNA</sequence>
<protein>
    <recommendedName>
        <fullName evidence="1">RNA-binding protein Hfq</fullName>
    </recommendedName>
</protein>
<accession>B0KKZ5</accession>
<name>HFQ_PSEPG</name>